<reference key="1">
    <citation type="journal article" date="2005" name="J. Bacteriol.">
        <title>Insights into genome plasticity and pathogenicity of the plant pathogenic Bacterium Xanthomonas campestris pv. vesicatoria revealed by the complete genome sequence.</title>
        <authorList>
            <person name="Thieme F."/>
            <person name="Koebnik R."/>
            <person name="Bekel T."/>
            <person name="Berger C."/>
            <person name="Boch J."/>
            <person name="Buettner D."/>
            <person name="Caldana C."/>
            <person name="Gaigalat L."/>
            <person name="Goesmann A."/>
            <person name="Kay S."/>
            <person name="Kirchner O."/>
            <person name="Lanz C."/>
            <person name="Linke B."/>
            <person name="McHardy A.C."/>
            <person name="Meyer F."/>
            <person name="Mittenhuber G."/>
            <person name="Nies D.H."/>
            <person name="Niesbach-Kloesgen U."/>
            <person name="Patschkowski T."/>
            <person name="Rueckert C."/>
            <person name="Rupp O."/>
            <person name="Schneiker S."/>
            <person name="Schuster S.C."/>
            <person name="Vorhoelter F.J."/>
            <person name="Weber E."/>
            <person name="Puehler A."/>
            <person name="Bonas U."/>
            <person name="Bartels D."/>
            <person name="Kaiser O."/>
        </authorList>
    </citation>
    <scope>NUCLEOTIDE SEQUENCE [LARGE SCALE GENOMIC DNA]</scope>
    <source>
        <strain>85-10</strain>
    </source>
</reference>
<protein>
    <recommendedName>
        <fullName evidence="1">tRNA uridine 5-carboxymethylaminomethyl modification enzyme MnmG</fullName>
    </recommendedName>
    <alternativeName>
        <fullName evidence="1">Glucose-inhibited division protein A</fullName>
    </alternativeName>
</protein>
<dbReference type="EMBL" id="AM039952">
    <property type="protein sequence ID" value="CAJ22022.1"/>
    <property type="molecule type" value="Genomic_DNA"/>
</dbReference>
<dbReference type="RefSeq" id="WP_011346079.1">
    <property type="nucleotide sequence ID" value="NZ_CP017190.1"/>
</dbReference>
<dbReference type="SMR" id="Q3BYP1"/>
<dbReference type="STRING" id="456327.BJD11_20910"/>
<dbReference type="KEGG" id="xcv:XCV0391"/>
<dbReference type="eggNOG" id="COG0445">
    <property type="taxonomic scope" value="Bacteria"/>
</dbReference>
<dbReference type="HOGENOM" id="CLU_007831_2_2_6"/>
<dbReference type="Proteomes" id="UP000007069">
    <property type="component" value="Chromosome"/>
</dbReference>
<dbReference type="GO" id="GO:0005829">
    <property type="term" value="C:cytosol"/>
    <property type="evidence" value="ECO:0007669"/>
    <property type="project" value="TreeGrafter"/>
</dbReference>
<dbReference type="GO" id="GO:0050660">
    <property type="term" value="F:flavin adenine dinucleotide binding"/>
    <property type="evidence" value="ECO:0007669"/>
    <property type="project" value="UniProtKB-UniRule"/>
</dbReference>
<dbReference type="GO" id="GO:0030488">
    <property type="term" value="P:tRNA methylation"/>
    <property type="evidence" value="ECO:0007669"/>
    <property type="project" value="TreeGrafter"/>
</dbReference>
<dbReference type="GO" id="GO:0002098">
    <property type="term" value="P:tRNA wobble uridine modification"/>
    <property type="evidence" value="ECO:0007669"/>
    <property type="project" value="InterPro"/>
</dbReference>
<dbReference type="FunFam" id="1.10.10.1800:FF:000001">
    <property type="entry name" value="tRNA uridine 5-carboxymethylaminomethyl modification enzyme MnmG"/>
    <property type="match status" value="1"/>
</dbReference>
<dbReference type="FunFam" id="1.10.150.570:FF:000001">
    <property type="entry name" value="tRNA uridine 5-carboxymethylaminomethyl modification enzyme MnmG"/>
    <property type="match status" value="1"/>
</dbReference>
<dbReference type="FunFam" id="3.50.50.60:FF:000002">
    <property type="entry name" value="tRNA uridine 5-carboxymethylaminomethyl modification enzyme MnmG"/>
    <property type="match status" value="1"/>
</dbReference>
<dbReference type="FunFam" id="3.50.50.60:FF:000010">
    <property type="entry name" value="tRNA uridine 5-carboxymethylaminomethyl modification enzyme MnmG"/>
    <property type="match status" value="1"/>
</dbReference>
<dbReference type="Gene3D" id="3.50.50.60">
    <property type="entry name" value="FAD/NAD(P)-binding domain"/>
    <property type="match status" value="2"/>
</dbReference>
<dbReference type="Gene3D" id="1.10.150.570">
    <property type="entry name" value="GidA associated domain, C-terminal subdomain"/>
    <property type="match status" value="1"/>
</dbReference>
<dbReference type="Gene3D" id="1.10.10.1800">
    <property type="entry name" value="tRNA uridine 5-carboxymethylaminomethyl modification enzyme MnmG/GidA"/>
    <property type="match status" value="1"/>
</dbReference>
<dbReference type="HAMAP" id="MF_00129">
    <property type="entry name" value="MnmG_GidA"/>
    <property type="match status" value="1"/>
</dbReference>
<dbReference type="InterPro" id="IPR036188">
    <property type="entry name" value="FAD/NAD-bd_sf"/>
</dbReference>
<dbReference type="InterPro" id="IPR049312">
    <property type="entry name" value="GIDA_C_N"/>
</dbReference>
<dbReference type="InterPro" id="IPR004416">
    <property type="entry name" value="MnmG"/>
</dbReference>
<dbReference type="InterPro" id="IPR002218">
    <property type="entry name" value="MnmG-rel"/>
</dbReference>
<dbReference type="InterPro" id="IPR020595">
    <property type="entry name" value="MnmG-rel_CS"/>
</dbReference>
<dbReference type="InterPro" id="IPR026904">
    <property type="entry name" value="MnmG_C"/>
</dbReference>
<dbReference type="InterPro" id="IPR047001">
    <property type="entry name" value="MnmG_C_subdom"/>
</dbReference>
<dbReference type="InterPro" id="IPR044920">
    <property type="entry name" value="MnmG_C_subdom_sf"/>
</dbReference>
<dbReference type="InterPro" id="IPR040131">
    <property type="entry name" value="MnmG_N"/>
</dbReference>
<dbReference type="NCBIfam" id="TIGR00136">
    <property type="entry name" value="mnmG_gidA"/>
    <property type="match status" value="1"/>
</dbReference>
<dbReference type="PANTHER" id="PTHR11806">
    <property type="entry name" value="GLUCOSE INHIBITED DIVISION PROTEIN A"/>
    <property type="match status" value="1"/>
</dbReference>
<dbReference type="PANTHER" id="PTHR11806:SF0">
    <property type="entry name" value="PROTEIN MTO1 HOMOLOG, MITOCHONDRIAL"/>
    <property type="match status" value="1"/>
</dbReference>
<dbReference type="Pfam" id="PF01134">
    <property type="entry name" value="GIDA"/>
    <property type="match status" value="1"/>
</dbReference>
<dbReference type="Pfam" id="PF21680">
    <property type="entry name" value="GIDA_C_1st"/>
    <property type="match status" value="1"/>
</dbReference>
<dbReference type="Pfam" id="PF13932">
    <property type="entry name" value="SAM_GIDA_C"/>
    <property type="match status" value="1"/>
</dbReference>
<dbReference type="SMART" id="SM01228">
    <property type="entry name" value="GIDA_assoc_3"/>
    <property type="match status" value="1"/>
</dbReference>
<dbReference type="SUPFAM" id="SSF51905">
    <property type="entry name" value="FAD/NAD(P)-binding domain"/>
    <property type="match status" value="1"/>
</dbReference>
<dbReference type="PROSITE" id="PS01280">
    <property type="entry name" value="GIDA_1"/>
    <property type="match status" value="1"/>
</dbReference>
<dbReference type="PROSITE" id="PS01281">
    <property type="entry name" value="GIDA_2"/>
    <property type="match status" value="1"/>
</dbReference>
<gene>
    <name evidence="1" type="primary">mnmG</name>
    <name evidence="1" type="synonym">gidA</name>
    <name type="ordered locus">XCV0391</name>
</gene>
<organism>
    <name type="scientific">Xanthomonas euvesicatoria pv. vesicatoria (strain 85-10)</name>
    <name type="common">Xanthomonas campestris pv. vesicatoria</name>
    <dbReference type="NCBI Taxonomy" id="316273"/>
    <lineage>
        <taxon>Bacteria</taxon>
        <taxon>Pseudomonadati</taxon>
        <taxon>Pseudomonadota</taxon>
        <taxon>Gammaproteobacteria</taxon>
        <taxon>Lysobacterales</taxon>
        <taxon>Lysobacteraceae</taxon>
        <taxon>Xanthomonas</taxon>
    </lineage>
</organism>
<comment type="function">
    <text evidence="1">NAD-binding protein involved in the addition of a carboxymethylaminomethyl (cmnm) group at the wobble position (U34) of certain tRNAs, forming tRNA-cmnm(5)s(2)U34.</text>
</comment>
<comment type="cofactor">
    <cofactor evidence="1">
        <name>FAD</name>
        <dbReference type="ChEBI" id="CHEBI:57692"/>
    </cofactor>
</comment>
<comment type="subunit">
    <text evidence="1">Homodimer. Heterotetramer of two MnmE and two MnmG subunits.</text>
</comment>
<comment type="subcellular location">
    <subcellularLocation>
        <location evidence="1">Cytoplasm</location>
    </subcellularLocation>
</comment>
<comment type="similarity">
    <text evidence="1">Belongs to the MnmG family.</text>
</comment>
<keyword id="KW-0963">Cytoplasm</keyword>
<keyword id="KW-0274">FAD</keyword>
<keyword id="KW-0285">Flavoprotein</keyword>
<keyword id="KW-0520">NAD</keyword>
<keyword id="KW-0819">tRNA processing</keyword>
<accession>Q3BYP1</accession>
<name>MNMG_XANE5</name>
<sequence>MSDSFYRYDVIVIGGGHAGTEAALASARTGARTLLLTHNIETVGAMSCNPAIGGIGKGHLVKEIDGLGGAMARAADLAGIQWRTLNASKGPAVRATRCQADRNLYRTAIRCIVEAQPNLTVFQAAVDDLIIHNGTSEADSVRGVITQTGLRFQAPSVVLTAGTFLAGKIHVGETQYAAGRMGDPPATTLAARLRERPFAIDRLKTGTPPRIDGRTLDYGVMAEQPGDDPLPVMSFMGQVSDHPRQVSCWITQTTEQTHEIIRNALHRSPLYSGQIEGIGPRYCPSIEDKVVRFAEKTSHQIFVEPEGLEVAEIYPNGISTSLPFDVQLALVRSIHGFANAHITRPGYAIEYDFFDPRGLKASLETKAVGGLFFAGQINGTTGYEEAAAQGLLAGLNAARHVQGLPAWSPRRDEAYLGVLVDDLITHGTTEPYRMFTSRAEYRLQLREDNADARLTGVGRAMGLVDDARWARFAAKQEAVQRETTRLSALWATPGNALGREVAGALGVTVSRETNVLDLIKRPELTYATLMRVPTLGPGVDDAQVAEQVEISVKYAGYLDRQRDDIARQQRHETTPIPEGFDYASVRGLSIEVQQKLERVRPQHIGQAQRIPGMTPAAISLLLVHLERARRSQVA</sequence>
<evidence type="ECO:0000255" key="1">
    <source>
        <dbReference type="HAMAP-Rule" id="MF_00129"/>
    </source>
</evidence>
<proteinExistence type="inferred from homology"/>
<feature type="chain" id="PRO_1000016708" description="tRNA uridine 5-carboxymethylaminomethyl modification enzyme MnmG">
    <location>
        <begin position="1"/>
        <end position="634"/>
    </location>
</feature>
<feature type="binding site" evidence="1">
    <location>
        <begin position="14"/>
        <end position="19"/>
    </location>
    <ligand>
        <name>FAD</name>
        <dbReference type="ChEBI" id="CHEBI:57692"/>
    </ligand>
</feature>
<feature type="binding site" evidence="1">
    <location>
        <begin position="279"/>
        <end position="293"/>
    </location>
    <ligand>
        <name>NAD(+)</name>
        <dbReference type="ChEBI" id="CHEBI:57540"/>
    </ligand>
</feature>